<sequence>MRQIFNRVKWSGRRAYFWFISRGSPGGEEVLSTDDVVEVGANGVVVSVGGRERYIPYHRIVEIRLESGEVLLSRRGGREPSGGL</sequence>
<dbReference type="EMBL" id="CP000504">
    <property type="protein sequence ID" value="ABL89066.1"/>
    <property type="molecule type" value="Genomic_DNA"/>
</dbReference>
<dbReference type="RefSeq" id="WP_011763641.1">
    <property type="nucleotide sequence ID" value="NC_008701.1"/>
</dbReference>
<dbReference type="STRING" id="384616.Pisl_1919"/>
<dbReference type="GeneID" id="4616452"/>
<dbReference type="KEGG" id="pis:Pisl_1919"/>
<dbReference type="eggNOG" id="arCOG01302">
    <property type="taxonomic scope" value="Archaea"/>
</dbReference>
<dbReference type="HOGENOM" id="CLU_172276_3_0_2"/>
<dbReference type="OrthoDB" id="14794at2157"/>
<dbReference type="Proteomes" id="UP000002595">
    <property type="component" value="Chromosome"/>
</dbReference>
<dbReference type="HAMAP" id="MF_01245">
    <property type="entry name" value="UPF0248"/>
    <property type="match status" value="1"/>
</dbReference>
<dbReference type="InterPro" id="IPR007547">
    <property type="entry name" value="UPF0248"/>
</dbReference>
<organism>
    <name type="scientific">Pyrobaculum islandicum (strain DSM 4184 / JCM 9189 / GEO3)</name>
    <dbReference type="NCBI Taxonomy" id="384616"/>
    <lineage>
        <taxon>Archaea</taxon>
        <taxon>Thermoproteota</taxon>
        <taxon>Thermoprotei</taxon>
        <taxon>Thermoproteales</taxon>
        <taxon>Thermoproteaceae</taxon>
        <taxon>Pyrobaculum</taxon>
    </lineage>
</organism>
<protein>
    <recommendedName>
        <fullName evidence="1">UPF0248 protein Pisl_1919</fullName>
    </recommendedName>
</protein>
<gene>
    <name type="ordered locus">Pisl_1919</name>
</gene>
<comment type="similarity">
    <text evidence="1">Belongs to the UPF0248 family.</text>
</comment>
<accession>A1RVT4</accession>
<proteinExistence type="inferred from homology"/>
<name>Y1919_PYRIL</name>
<evidence type="ECO:0000255" key="1">
    <source>
        <dbReference type="HAMAP-Rule" id="MF_01245"/>
    </source>
</evidence>
<feature type="chain" id="PRO_1000067076" description="UPF0248 protein Pisl_1919">
    <location>
        <begin position="1"/>
        <end position="84"/>
    </location>
</feature>
<reference key="1">
    <citation type="submission" date="2006-12" db="EMBL/GenBank/DDBJ databases">
        <title>Complete sequence of Pyrobaculum islandicum DSM 4184.</title>
        <authorList>
            <person name="Copeland A."/>
            <person name="Lucas S."/>
            <person name="Lapidus A."/>
            <person name="Barry K."/>
            <person name="Detter J.C."/>
            <person name="Glavina del Rio T."/>
            <person name="Dalin E."/>
            <person name="Tice H."/>
            <person name="Pitluck S."/>
            <person name="Meincke L."/>
            <person name="Brettin T."/>
            <person name="Bruce D."/>
            <person name="Han C."/>
            <person name="Tapia R."/>
            <person name="Gilna P."/>
            <person name="Schmutz J."/>
            <person name="Larimer F."/>
            <person name="Land M."/>
            <person name="Hauser L."/>
            <person name="Kyrpides N."/>
            <person name="Mikhailova N."/>
            <person name="Cozen A.E."/>
            <person name="Fitz-Gibbon S.T."/>
            <person name="House C.H."/>
            <person name="Saltikov C."/>
            <person name="Lowe T."/>
            <person name="Richardson P."/>
        </authorList>
    </citation>
    <scope>NUCLEOTIDE SEQUENCE [LARGE SCALE GENOMIC DNA]</scope>
    <source>
        <strain>DSM 4184 / JCM 9189 / GEO3</strain>
    </source>
</reference>